<accession>Q05242</accession>
<organismHost>
    <name type="scientific">Mycobacterium</name>
    <dbReference type="NCBI Taxonomy" id="1763"/>
</organismHost>
<protein>
    <recommendedName>
        <fullName>Gene 3 protein</fullName>
    </recommendedName>
    <alternativeName>
        <fullName>Gp3</fullName>
    </alternativeName>
</protein>
<feature type="chain" id="PRO_0000164701" description="Gene 3 protein">
    <location>
        <begin position="1"/>
        <end position="83"/>
    </location>
</feature>
<keyword id="KW-1185">Reference proteome</keyword>
<reference key="1">
    <citation type="journal article" date="1993" name="Mol. Microbiol.">
        <title>DNA sequence, structure and gene expression of mycobacteriophage L5: a phage system for mycobacterial genetics.</title>
        <authorList>
            <person name="Hatfull G.F."/>
            <person name="Sarkis G.J."/>
        </authorList>
    </citation>
    <scope>NUCLEOTIDE SEQUENCE [LARGE SCALE GENOMIC DNA]</scope>
</reference>
<dbReference type="EMBL" id="Z18946">
    <property type="protein sequence ID" value="CAA79382.1"/>
    <property type="molecule type" value="Genomic_DNA"/>
</dbReference>
<dbReference type="PIR" id="S30951">
    <property type="entry name" value="S30951"/>
</dbReference>
<dbReference type="RefSeq" id="NP_039670.1">
    <property type="nucleotide sequence ID" value="NC_001335.1"/>
</dbReference>
<dbReference type="GeneID" id="2942969"/>
<dbReference type="KEGG" id="vg:2942969"/>
<dbReference type="OrthoDB" id="20206at10239"/>
<dbReference type="Proteomes" id="UP000002123">
    <property type="component" value="Genome"/>
</dbReference>
<name>VG03_BPML5</name>
<proteinExistence type="predicted"/>
<organism>
    <name type="scientific">Mycobacterium phage L5</name>
    <name type="common">Mycobacteriophage L5</name>
    <dbReference type="NCBI Taxonomy" id="31757"/>
    <lineage>
        <taxon>Viruses</taxon>
        <taxon>Duplodnaviria</taxon>
        <taxon>Heunggongvirae</taxon>
        <taxon>Uroviricota</taxon>
        <taxon>Caudoviricetes</taxon>
        <taxon>Fromanvirus</taxon>
    </lineage>
</organism>
<gene>
    <name type="primary">3</name>
</gene>
<sequence length="83" mass="8967">MAQMQATHTIEGFLAVEVAPRAFVAENGHVLTRLSATKWGGGEGLEILNYEGPGTVEVSDEKLAEAQRASEVEAELRREVGKE</sequence>